<proteinExistence type="evidence at transcript level"/>
<accession>Q40465</accession>
<protein>
    <recommendedName>
        <fullName>Eukaryotic initiation factor 4A-11</fullName>
        <shortName>eIF-4A-11</shortName>
        <ecNumber>3.6.4.13</ecNumber>
    </recommendedName>
    <alternativeName>
        <fullName>ATP-dependent RNA helicase eIF4A-11</fullName>
    </alternativeName>
</protein>
<sequence length="413" mass="46902">MAGLAPEGSQFDARQYDAKMTELLGTEQQEFFTSYDEVYESFDAMGLQENLLRGIYAYGFEKPSAIQQRGIVPFCKGLDVIQQAQSGTGKTATFCSGILQQLDYSLVECQALVLAPTRELAQQIEKVMRALGDYLGVKVHACVGGTSVREDQRILQSGVHVVVGTPGRVFDMLRRQSLRPDNIKMFVLDEADEMLSRGFKDQIYDIFQLLPPKIQVGVFSATMPPEALEITRKFMNKPVRILVKRDELTLEGIKQFYVNVDKEEWKLETLCDLYETLAITQSVIFVNTRRKVDWLTDKMRGRDHTVSATHGDMDQNTRDIIMREFRSGSSRVLITTDLLARGIDVQQVSLVINYDLPTQPENYLHRIGHSGRFGRKGVSINFVTKDDERMLFDIQKFYNVVIEELPANVADLL</sequence>
<name>IF411_TOBAC</name>
<keyword id="KW-0067">ATP-binding</keyword>
<keyword id="KW-0347">Helicase</keyword>
<keyword id="KW-0378">Hydrolase</keyword>
<keyword id="KW-0396">Initiation factor</keyword>
<keyword id="KW-0547">Nucleotide-binding</keyword>
<keyword id="KW-0648">Protein biosynthesis</keyword>
<keyword id="KW-1185">Reference proteome</keyword>
<keyword id="KW-0694">RNA-binding</keyword>
<feature type="chain" id="PRO_0000054958" description="Eukaryotic initiation factor 4A-11">
    <location>
        <begin position="1"/>
        <end position="413"/>
    </location>
</feature>
<feature type="domain" description="Helicase ATP-binding" evidence="2">
    <location>
        <begin position="71"/>
        <end position="241"/>
    </location>
</feature>
<feature type="domain" description="Helicase C-terminal" evidence="3">
    <location>
        <begin position="252"/>
        <end position="413"/>
    </location>
</feature>
<feature type="short sequence motif" description="Q motif">
    <location>
        <begin position="40"/>
        <end position="68"/>
    </location>
</feature>
<feature type="short sequence motif" description="DEAD box">
    <location>
        <begin position="189"/>
        <end position="192"/>
    </location>
</feature>
<feature type="binding site" evidence="2">
    <location>
        <begin position="84"/>
        <end position="91"/>
    </location>
    <ligand>
        <name>ATP</name>
        <dbReference type="ChEBI" id="CHEBI:30616"/>
    </ligand>
</feature>
<evidence type="ECO:0000250" key="1"/>
<evidence type="ECO:0000255" key="2">
    <source>
        <dbReference type="PROSITE-ProRule" id="PRU00541"/>
    </source>
</evidence>
<evidence type="ECO:0000255" key="3">
    <source>
        <dbReference type="PROSITE-ProRule" id="PRU00542"/>
    </source>
</evidence>
<evidence type="ECO:0000305" key="4"/>
<dbReference type="EC" id="3.6.4.13"/>
<dbReference type="EMBL" id="X79136">
    <property type="protein sequence ID" value="CAA55737.1"/>
    <property type="molecule type" value="mRNA"/>
</dbReference>
<dbReference type="PIR" id="S52018">
    <property type="entry name" value="S52018"/>
</dbReference>
<dbReference type="RefSeq" id="NP_001312323.1">
    <property type="nucleotide sequence ID" value="NM_001325394.1"/>
</dbReference>
<dbReference type="SMR" id="Q40465"/>
<dbReference type="STRING" id="4097.Q40465"/>
<dbReference type="PaxDb" id="4097-Q40465"/>
<dbReference type="ProMEX" id="Q40465"/>
<dbReference type="GeneID" id="107785067"/>
<dbReference type="KEGG" id="nta:107785067"/>
<dbReference type="OrthoDB" id="1213547at2759"/>
<dbReference type="Proteomes" id="UP000084051">
    <property type="component" value="Unplaced"/>
</dbReference>
<dbReference type="GO" id="GO:0010494">
    <property type="term" value="C:cytoplasmic stress granule"/>
    <property type="evidence" value="ECO:0000318"/>
    <property type="project" value="GO_Central"/>
</dbReference>
<dbReference type="GO" id="GO:0005524">
    <property type="term" value="F:ATP binding"/>
    <property type="evidence" value="ECO:0007669"/>
    <property type="project" value="UniProtKB-KW"/>
</dbReference>
<dbReference type="GO" id="GO:0016887">
    <property type="term" value="F:ATP hydrolysis activity"/>
    <property type="evidence" value="ECO:0007669"/>
    <property type="project" value="RHEA"/>
</dbReference>
<dbReference type="GO" id="GO:0003723">
    <property type="term" value="F:RNA binding"/>
    <property type="evidence" value="ECO:0007669"/>
    <property type="project" value="UniProtKB-KW"/>
</dbReference>
<dbReference type="GO" id="GO:0003724">
    <property type="term" value="F:RNA helicase activity"/>
    <property type="evidence" value="ECO:0007669"/>
    <property type="project" value="UniProtKB-EC"/>
</dbReference>
<dbReference type="GO" id="GO:0003743">
    <property type="term" value="F:translation initiation factor activity"/>
    <property type="evidence" value="ECO:0000318"/>
    <property type="project" value="GO_Central"/>
</dbReference>
<dbReference type="GO" id="GO:0002183">
    <property type="term" value="P:cytoplasmic translational initiation"/>
    <property type="evidence" value="ECO:0000318"/>
    <property type="project" value="GO_Central"/>
</dbReference>
<dbReference type="CDD" id="cd17939">
    <property type="entry name" value="DEADc_EIF4A"/>
    <property type="match status" value="1"/>
</dbReference>
<dbReference type="CDD" id="cd18787">
    <property type="entry name" value="SF2_C_DEAD"/>
    <property type="match status" value="1"/>
</dbReference>
<dbReference type="FunFam" id="3.40.50.300:FF:000089">
    <property type="entry name" value="Eukaryotic initiation factor 4A-II"/>
    <property type="match status" value="1"/>
</dbReference>
<dbReference type="FunFam" id="3.40.50.300:FF:000031">
    <property type="entry name" value="Eukaryotic initiation factor 4A-III"/>
    <property type="match status" value="1"/>
</dbReference>
<dbReference type="Gene3D" id="3.40.50.300">
    <property type="entry name" value="P-loop containing nucleotide triphosphate hydrolases"/>
    <property type="match status" value="2"/>
</dbReference>
<dbReference type="InterPro" id="IPR011545">
    <property type="entry name" value="DEAD/DEAH_box_helicase_dom"/>
</dbReference>
<dbReference type="InterPro" id="IPR014001">
    <property type="entry name" value="Helicase_ATP-bd"/>
</dbReference>
<dbReference type="InterPro" id="IPR001650">
    <property type="entry name" value="Helicase_C-like"/>
</dbReference>
<dbReference type="InterPro" id="IPR027417">
    <property type="entry name" value="P-loop_NTPase"/>
</dbReference>
<dbReference type="InterPro" id="IPR000629">
    <property type="entry name" value="RNA-helicase_DEAD-box_CS"/>
</dbReference>
<dbReference type="InterPro" id="IPR014014">
    <property type="entry name" value="RNA_helicase_DEAD_Q_motif"/>
</dbReference>
<dbReference type="PANTHER" id="PTHR47958">
    <property type="entry name" value="ATP-DEPENDENT RNA HELICASE DBP3"/>
    <property type="match status" value="1"/>
</dbReference>
<dbReference type="Pfam" id="PF00270">
    <property type="entry name" value="DEAD"/>
    <property type="match status" value="1"/>
</dbReference>
<dbReference type="Pfam" id="PF00271">
    <property type="entry name" value="Helicase_C"/>
    <property type="match status" value="1"/>
</dbReference>
<dbReference type="SMART" id="SM00487">
    <property type="entry name" value="DEXDc"/>
    <property type="match status" value="1"/>
</dbReference>
<dbReference type="SMART" id="SM00490">
    <property type="entry name" value="HELICc"/>
    <property type="match status" value="1"/>
</dbReference>
<dbReference type="SUPFAM" id="SSF52540">
    <property type="entry name" value="P-loop containing nucleoside triphosphate hydrolases"/>
    <property type="match status" value="1"/>
</dbReference>
<dbReference type="PROSITE" id="PS00039">
    <property type="entry name" value="DEAD_ATP_HELICASE"/>
    <property type="match status" value="1"/>
</dbReference>
<dbReference type="PROSITE" id="PS51192">
    <property type="entry name" value="HELICASE_ATP_BIND_1"/>
    <property type="match status" value="1"/>
</dbReference>
<dbReference type="PROSITE" id="PS51194">
    <property type="entry name" value="HELICASE_CTER"/>
    <property type="match status" value="1"/>
</dbReference>
<dbReference type="PROSITE" id="PS51195">
    <property type="entry name" value="Q_MOTIF"/>
    <property type="match status" value="1"/>
</dbReference>
<reference key="1">
    <citation type="journal article" date="1994" name="Plant Mol. Biol.">
        <title>Characterization of the tobacco eIF-4A gene family.</title>
        <authorList>
            <person name="Owttrim G.W."/>
            <person name="Mandel T."/>
            <person name="Trachsel H."/>
            <person name="Thomas A.A."/>
            <person name="Kuhlemeier C."/>
        </authorList>
    </citation>
    <scope>NUCLEOTIDE SEQUENCE [MRNA]</scope>
    <source>
        <strain>cv. SR1</strain>
    </source>
</reference>
<organism>
    <name type="scientific">Nicotiana tabacum</name>
    <name type="common">Common tobacco</name>
    <dbReference type="NCBI Taxonomy" id="4097"/>
    <lineage>
        <taxon>Eukaryota</taxon>
        <taxon>Viridiplantae</taxon>
        <taxon>Streptophyta</taxon>
        <taxon>Embryophyta</taxon>
        <taxon>Tracheophyta</taxon>
        <taxon>Spermatophyta</taxon>
        <taxon>Magnoliopsida</taxon>
        <taxon>eudicotyledons</taxon>
        <taxon>Gunneridae</taxon>
        <taxon>Pentapetalae</taxon>
        <taxon>asterids</taxon>
        <taxon>lamiids</taxon>
        <taxon>Solanales</taxon>
        <taxon>Solanaceae</taxon>
        <taxon>Nicotianoideae</taxon>
        <taxon>Nicotianeae</taxon>
        <taxon>Nicotiana</taxon>
    </lineage>
</organism>
<comment type="function">
    <text evidence="1">ATP-dependent RNA helicase which is a subunit of the eIF4F complex involved in cap recognition and is required for mRNA binding to ribosome. In the current model of translation initiation, eIF4A unwinds RNA secondary structures in the 5'-UTR of mRNAs which is necessary to allow efficient binding of the small ribosomal subunit, and subsequent scanning for the initiator codon (By similarity).</text>
</comment>
<comment type="catalytic activity">
    <reaction>
        <text>ATP + H2O = ADP + phosphate + H(+)</text>
        <dbReference type="Rhea" id="RHEA:13065"/>
        <dbReference type="ChEBI" id="CHEBI:15377"/>
        <dbReference type="ChEBI" id="CHEBI:15378"/>
        <dbReference type="ChEBI" id="CHEBI:30616"/>
        <dbReference type="ChEBI" id="CHEBI:43474"/>
        <dbReference type="ChEBI" id="CHEBI:456216"/>
        <dbReference type="EC" id="3.6.4.13"/>
    </reaction>
</comment>
<comment type="subunit">
    <text evidence="1">eIF4F is a multi-subunit complex, the composition of which varies with external and internal environmental conditions. It is composed of at least EIF4A, EIF4E and EIF4G (By similarity).</text>
</comment>
<comment type="similarity">
    <text evidence="4">Belongs to the DEAD box helicase family. eIF4A subfamily.</text>
</comment>